<organism>
    <name type="scientific">Cyprinus carpio</name>
    <name type="common">Common carp</name>
    <dbReference type="NCBI Taxonomy" id="7962"/>
    <lineage>
        <taxon>Eukaryota</taxon>
        <taxon>Metazoa</taxon>
        <taxon>Chordata</taxon>
        <taxon>Craniata</taxon>
        <taxon>Vertebrata</taxon>
        <taxon>Euteleostomi</taxon>
        <taxon>Actinopterygii</taxon>
        <taxon>Neopterygii</taxon>
        <taxon>Teleostei</taxon>
        <taxon>Ostariophysi</taxon>
        <taxon>Cypriniformes</taxon>
        <taxon>Cyprinidae</taxon>
        <taxon>Cyprininae</taxon>
        <taxon>Cyprinus</taxon>
    </lineage>
</organism>
<comment type="function">
    <text evidence="1">Plays an important role in the organization of the cytoskeleton. Binds to and sequesters actin monomers (G actin) and therefore inhibits actin polymerization (By similarity).</text>
</comment>
<comment type="subcellular location">
    <subcellularLocation>
        <location evidence="1">Cytoplasm</location>
        <location evidence="1">Cytoskeleton</location>
    </subcellularLocation>
</comment>
<comment type="similarity">
    <text evidence="3">Belongs to the thymosin beta family.</text>
</comment>
<sequence length="43" mass="4970">MADKPDISEVSQFDKTKLKKTETQEKNTLPTKETIEQEKQCEA</sequence>
<feature type="initiator methionine" description="Removed" evidence="1">
    <location>
        <position position="1"/>
    </location>
</feature>
<feature type="chain" id="PRO_0000045936" description="Thymosin beta-b">
    <location>
        <begin position="2"/>
        <end position="43"/>
    </location>
</feature>
<feature type="region of interest" description="Disordered" evidence="2">
    <location>
        <begin position="1"/>
        <end position="43"/>
    </location>
</feature>
<feature type="compositionally biased region" description="Basic and acidic residues" evidence="2">
    <location>
        <begin position="1"/>
        <end position="25"/>
    </location>
</feature>
<feature type="compositionally biased region" description="Basic and acidic residues" evidence="2">
    <location>
        <begin position="33"/>
        <end position="43"/>
    </location>
</feature>
<reference key="1">
    <citation type="submission" date="1999-06" db="EMBL/GenBank/DDBJ databases">
        <title>Molecular cloning of carp (Cyprinus carpio) thymosin beta b.</title>
        <authorList>
            <person name="Fujiki K."/>
            <person name="Nakao M."/>
            <person name="Shin D."/>
            <person name="Yano T."/>
        </authorList>
    </citation>
    <scope>NUCLEOTIDE SEQUENCE [MRNA]</scope>
</reference>
<keyword id="KW-0009">Actin-binding</keyword>
<keyword id="KW-0963">Cytoplasm</keyword>
<keyword id="KW-0206">Cytoskeleton</keyword>
<keyword id="KW-1185">Reference proteome</keyword>
<dbReference type="EMBL" id="AB028457">
    <property type="protein sequence ID" value="BAA96493.1"/>
    <property type="molecule type" value="mRNA"/>
</dbReference>
<dbReference type="RefSeq" id="XP_018940974.1">
    <property type="nucleotide sequence ID" value="XM_019085429.1"/>
</dbReference>
<dbReference type="SMR" id="Q9I954"/>
<dbReference type="Ensembl" id="ENSCCRT00010056854.1">
    <property type="protein sequence ID" value="ENSCCRP00010051842.1"/>
    <property type="gene ID" value="ENSCCRG00010022007.1"/>
</dbReference>
<dbReference type="Ensembl" id="ENSCCRT00015025809.1">
    <property type="protein sequence ID" value="ENSCCRP00015024905.1"/>
    <property type="gene ID" value="ENSCCRG00015010568.1"/>
</dbReference>
<dbReference type="Ensembl" id="ENSCCRT00020003657.1">
    <property type="protein sequence ID" value="ENSCCRP00020003159.1"/>
    <property type="gene ID" value="ENSCCRG00020001847.1"/>
</dbReference>
<dbReference type="KEGG" id="ccar:109068673"/>
<dbReference type="Proteomes" id="UP000694384">
    <property type="component" value="Unplaced"/>
</dbReference>
<dbReference type="Proteomes" id="UP000694427">
    <property type="component" value="Unplaced"/>
</dbReference>
<dbReference type="Proteomes" id="UP000694700">
    <property type="component" value="Unplaced"/>
</dbReference>
<dbReference type="Proteomes" id="UP000694701">
    <property type="component" value="Unplaced"/>
</dbReference>
<dbReference type="Proteomes" id="UP001155660">
    <property type="component" value="Unplaced"/>
</dbReference>
<dbReference type="GO" id="GO:0005737">
    <property type="term" value="C:cytoplasm"/>
    <property type="evidence" value="ECO:0007669"/>
    <property type="project" value="UniProtKB-KW"/>
</dbReference>
<dbReference type="GO" id="GO:0005856">
    <property type="term" value="C:cytoskeleton"/>
    <property type="evidence" value="ECO:0007669"/>
    <property type="project" value="UniProtKB-SubCell"/>
</dbReference>
<dbReference type="GO" id="GO:0003785">
    <property type="term" value="F:actin monomer binding"/>
    <property type="evidence" value="ECO:0007669"/>
    <property type="project" value="InterPro"/>
</dbReference>
<dbReference type="GO" id="GO:0007015">
    <property type="term" value="P:actin filament organization"/>
    <property type="evidence" value="ECO:0007669"/>
    <property type="project" value="InterPro"/>
</dbReference>
<dbReference type="GO" id="GO:0030334">
    <property type="term" value="P:regulation of cell migration"/>
    <property type="evidence" value="ECO:0007669"/>
    <property type="project" value="TreeGrafter"/>
</dbReference>
<dbReference type="FunFam" id="1.20.5.520:FF:000001">
    <property type="entry name" value="Thymosin beta"/>
    <property type="match status" value="1"/>
</dbReference>
<dbReference type="Gene3D" id="1.20.5.520">
    <property type="entry name" value="Single helix bin"/>
    <property type="match status" value="1"/>
</dbReference>
<dbReference type="InterPro" id="IPR001152">
    <property type="entry name" value="Beta-thymosin"/>
</dbReference>
<dbReference type="InterPro" id="IPR038386">
    <property type="entry name" value="Beta-thymosin_sf"/>
</dbReference>
<dbReference type="PANTHER" id="PTHR12021">
    <property type="entry name" value="THYMOSIN BETA"/>
    <property type="match status" value="1"/>
</dbReference>
<dbReference type="PANTHER" id="PTHR12021:SF10">
    <property type="entry name" value="THYMOSIN BETA-10"/>
    <property type="match status" value="1"/>
</dbReference>
<dbReference type="Pfam" id="PF01290">
    <property type="entry name" value="Thymosin"/>
    <property type="match status" value="1"/>
</dbReference>
<dbReference type="PIRSF" id="PIRSF001828">
    <property type="entry name" value="Thymosin_beta"/>
    <property type="match status" value="1"/>
</dbReference>
<dbReference type="SMART" id="SM00152">
    <property type="entry name" value="THY"/>
    <property type="match status" value="1"/>
</dbReference>
<dbReference type="PROSITE" id="PS00500">
    <property type="entry name" value="THYMOSIN_B4"/>
    <property type="match status" value="1"/>
</dbReference>
<accession>Q9I954</accession>
<name>TYBB_CYPCA</name>
<protein>
    <recommendedName>
        <fullName>Thymosin beta-b</fullName>
    </recommendedName>
</protein>
<proteinExistence type="inferred from homology"/>
<evidence type="ECO:0000250" key="1"/>
<evidence type="ECO:0000256" key="2">
    <source>
        <dbReference type="SAM" id="MobiDB-lite"/>
    </source>
</evidence>
<evidence type="ECO:0000305" key="3"/>